<name>OFUT3_MOUSE</name>
<comment type="function">
    <text evidence="2 5">Protein O-fucosyltransferase that specifically catalyzes O-fucosylation of serine or threonine residues in EMI domains of target proteins, such as MMRN1, MMRN2 and EMID1 (By similarity). Attaches fucose through an O-glycosidic linkage (By similarity). O-fucosylation of EMI domain-containing proteins may be required for facilitating protein folding and secretion (By similarity). May also show alpha-(1,3)-fucosyltransferase activity toward the innermost N-acetyl glucosamine (GlcNAc) residue in biantennary N-glycan acceptors (By similarity). However, this was tested with a library of synthetic substrates and this activity is unsure in vivo (By similarity). May be involved in biosynthesis of Lewis X-carrying biantennary N-glycans that regulate neuron stem cell self-renewal during brain development (PubMed:23986452).</text>
</comment>
<comment type="catalytic activity">
    <reaction evidence="2">
        <text>L-threonyl-[protein] + GDP-beta-L-fucose = 3-O-(alpha-L-fucosyl)-L-threonyl-[protein] + GDP + H(+)</text>
        <dbReference type="Rhea" id="RHEA:70491"/>
        <dbReference type="Rhea" id="RHEA-COMP:11060"/>
        <dbReference type="Rhea" id="RHEA-COMP:17915"/>
        <dbReference type="ChEBI" id="CHEBI:15378"/>
        <dbReference type="ChEBI" id="CHEBI:30013"/>
        <dbReference type="ChEBI" id="CHEBI:57273"/>
        <dbReference type="ChEBI" id="CHEBI:58189"/>
        <dbReference type="ChEBI" id="CHEBI:189631"/>
        <dbReference type="EC" id="2.4.1.221"/>
    </reaction>
    <physiologicalReaction direction="left-to-right" evidence="2">
        <dbReference type="Rhea" id="RHEA:70492"/>
    </physiologicalReaction>
</comment>
<comment type="catalytic activity">
    <reaction evidence="2">
        <text>L-seryl-[protein] + GDP-beta-L-fucose = 3-O-(alpha-L-fucosyl)-L-seryl-[protein] + GDP + H(+)</text>
        <dbReference type="Rhea" id="RHEA:63644"/>
        <dbReference type="Rhea" id="RHEA-COMP:9863"/>
        <dbReference type="Rhea" id="RHEA-COMP:17914"/>
        <dbReference type="ChEBI" id="CHEBI:15378"/>
        <dbReference type="ChEBI" id="CHEBI:29999"/>
        <dbReference type="ChEBI" id="CHEBI:57273"/>
        <dbReference type="ChEBI" id="CHEBI:58189"/>
        <dbReference type="ChEBI" id="CHEBI:189632"/>
        <dbReference type="EC" id="2.4.1.221"/>
    </reaction>
    <physiologicalReaction direction="left-to-right" evidence="2">
        <dbReference type="Rhea" id="RHEA:63645"/>
    </physiologicalReaction>
</comment>
<comment type="pathway">
    <text evidence="2">Protein modification; protein glycosylation.</text>
</comment>
<comment type="subcellular location">
    <subcellularLocation>
        <location evidence="2">Endoplasmic reticulum membrane</location>
        <topology evidence="3">Single-pass type II membrane protein</topology>
    </subcellularLocation>
</comment>
<comment type="alternative products">
    <event type="alternative splicing"/>
    <isoform>
        <id>Q5F2L2-1</id>
        <name>1</name>
        <name>Fut10A</name>
        <sequence type="displayed"/>
    </isoform>
    <isoform>
        <id>Q5F2L2-2</id>
        <name>2</name>
        <sequence type="described" ref="VSP_027509"/>
    </isoform>
    <isoform>
        <id>Q5F2L2-3</id>
        <name>3</name>
        <sequence type="described" ref="VSP_027507 VSP_027508"/>
    </isoform>
</comment>
<comment type="tissue specificity">
    <text evidence="4">Widely expressed, with a higher expression in liver and thymus.</text>
</comment>
<comment type="developmental stage">
    <text evidence="5">Expressed by Lewis X-positive neural precursor cells in the ventricular and subventricular zones of 15.5 dpc embryonic brain.</text>
</comment>
<comment type="similarity">
    <text evidence="9">Belongs to the glycosyltransferase 10 family.</text>
</comment>
<comment type="online information" name="Functional Glycomics Gateway - GTase">
    <link uri="http://www.functionalglycomics.org/glycomics/molecule/jsp/glycoEnzyme/viewGlycoEnzyme.jsp?gbpId=gt_mou_617"/>
    <text>Fucosyltransferase 10</text>
</comment>
<sequence>MVRFQRRKLLASCLCVTATVFLMVTLQVVVELGKFERKKLKDSNVQDGHRDVEGEPKHLEPFPEKEALALAGRTKVDAGSYPIVLWWSPLTGETGRLGQCGADACFFTINRTFQHHPMTRAFLFYGTDFNIDSLPLPREAHHDWALFHEESPKNNYKLFHKPVITLFNHTATFSRHSHLPLTTQYLEGVDVLKSLRYLVPLQAKNNLRQKLAPLVYVQSDCDPPSDRDSYVRELMAYIEVDSYGECLQNRDLPQQLKNPASMDADAFYRVIAQYKFILAFENAVCDDYITEKFWRPLKLGVVPVYYGSPTIADWLPSNRSAILVSEFSHPRELASFIRRLDYDDGLYETYVEWKLKGKISNQRLLTALNEREWGVQDINQDNYIDSFECMVCRRVWANSRLQEQGLPPKQWKADVSHLHCPEPALFTFSSPASPALRGRSLRELWLPSFQQSKKEAQALRWLVDRNQNFSSEEFWALVFKD</sequence>
<accession>Q5F2L2</accession>
<accession>Q8C457</accession>
<accession>Q8K0S3</accession>
<accession>Q8R247</accession>
<evidence type="ECO:0000250" key="1">
    <source>
        <dbReference type="UniProtKB" id="Q11130"/>
    </source>
</evidence>
<evidence type="ECO:0000250" key="2">
    <source>
        <dbReference type="UniProtKB" id="Q6P4F1"/>
    </source>
</evidence>
<evidence type="ECO:0000255" key="3"/>
<evidence type="ECO:0000269" key="4">
    <source>
    </source>
</evidence>
<evidence type="ECO:0000269" key="5">
    <source>
    </source>
</evidence>
<evidence type="ECO:0000303" key="6">
    <source>
    </source>
</evidence>
<evidence type="ECO:0000303" key="7">
    <source>
    </source>
</evidence>
<evidence type="ECO:0000303" key="8">
    <source>
    </source>
</evidence>
<evidence type="ECO:0000305" key="9"/>
<evidence type="ECO:0000312" key="10">
    <source>
        <dbReference type="MGI" id="MGI:2384748"/>
    </source>
</evidence>
<keyword id="KW-0025">Alternative splicing</keyword>
<keyword id="KW-1015">Disulfide bond</keyword>
<keyword id="KW-0256">Endoplasmic reticulum</keyword>
<keyword id="KW-0325">Glycoprotein</keyword>
<keyword id="KW-0328">Glycosyltransferase</keyword>
<keyword id="KW-0472">Membrane</keyword>
<keyword id="KW-1185">Reference proteome</keyword>
<keyword id="KW-0735">Signal-anchor</keyword>
<keyword id="KW-0808">Transferase</keyword>
<keyword id="KW-0812">Transmembrane</keyword>
<keyword id="KW-1133">Transmembrane helix</keyword>
<reference key="1">
    <citation type="submission" date="2005-02" db="EMBL/GenBank/DDBJ databases">
        <title>Phylogeny of fucosyltransferases.</title>
        <authorList>
            <person name="Martinez-Duncker I."/>
            <person name="Oriol R."/>
            <person name="Mollicone R."/>
        </authorList>
    </citation>
    <scope>NUCLEOTIDE SEQUENCE [MRNA] (ISOFORM 1)</scope>
    <source>
        <strain>C57BL/6J</strain>
    </source>
</reference>
<reference key="2">
    <citation type="journal article" date="2005" name="Science">
        <title>The transcriptional landscape of the mammalian genome.</title>
        <authorList>
            <person name="Carninci P."/>
            <person name="Kasukawa T."/>
            <person name="Katayama S."/>
            <person name="Gough J."/>
            <person name="Frith M.C."/>
            <person name="Maeda N."/>
            <person name="Oyama R."/>
            <person name="Ravasi T."/>
            <person name="Lenhard B."/>
            <person name="Wells C."/>
            <person name="Kodzius R."/>
            <person name="Shimokawa K."/>
            <person name="Bajic V.B."/>
            <person name="Brenner S.E."/>
            <person name="Batalov S."/>
            <person name="Forrest A.R."/>
            <person name="Zavolan M."/>
            <person name="Davis M.J."/>
            <person name="Wilming L.G."/>
            <person name="Aidinis V."/>
            <person name="Allen J.E."/>
            <person name="Ambesi-Impiombato A."/>
            <person name="Apweiler R."/>
            <person name="Aturaliya R.N."/>
            <person name="Bailey T.L."/>
            <person name="Bansal M."/>
            <person name="Baxter L."/>
            <person name="Beisel K.W."/>
            <person name="Bersano T."/>
            <person name="Bono H."/>
            <person name="Chalk A.M."/>
            <person name="Chiu K.P."/>
            <person name="Choudhary V."/>
            <person name="Christoffels A."/>
            <person name="Clutterbuck D.R."/>
            <person name="Crowe M.L."/>
            <person name="Dalla E."/>
            <person name="Dalrymple B.P."/>
            <person name="de Bono B."/>
            <person name="Della Gatta G."/>
            <person name="di Bernardo D."/>
            <person name="Down T."/>
            <person name="Engstrom P."/>
            <person name="Fagiolini M."/>
            <person name="Faulkner G."/>
            <person name="Fletcher C.F."/>
            <person name="Fukushima T."/>
            <person name="Furuno M."/>
            <person name="Futaki S."/>
            <person name="Gariboldi M."/>
            <person name="Georgii-Hemming P."/>
            <person name="Gingeras T.R."/>
            <person name="Gojobori T."/>
            <person name="Green R.E."/>
            <person name="Gustincich S."/>
            <person name="Harbers M."/>
            <person name="Hayashi Y."/>
            <person name="Hensch T.K."/>
            <person name="Hirokawa N."/>
            <person name="Hill D."/>
            <person name="Huminiecki L."/>
            <person name="Iacono M."/>
            <person name="Ikeo K."/>
            <person name="Iwama A."/>
            <person name="Ishikawa T."/>
            <person name="Jakt M."/>
            <person name="Kanapin A."/>
            <person name="Katoh M."/>
            <person name="Kawasawa Y."/>
            <person name="Kelso J."/>
            <person name="Kitamura H."/>
            <person name="Kitano H."/>
            <person name="Kollias G."/>
            <person name="Krishnan S.P."/>
            <person name="Kruger A."/>
            <person name="Kummerfeld S.K."/>
            <person name="Kurochkin I.V."/>
            <person name="Lareau L.F."/>
            <person name="Lazarevic D."/>
            <person name="Lipovich L."/>
            <person name="Liu J."/>
            <person name="Liuni S."/>
            <person name="McWilliam S."/>
            <person name="Madan Babu M."/>
            <person name="Madera M."/>
            <person name="Marchionni L."/>
            <person name="Matsuda H."/>
            <person name="Matsuzawa S."/>
            <person name="Miki H."/>
            <person name="Mignone F."/>
            <person name="Miyake S."/>
            <person name="Morris K."/>
            <person name="Mottagui-Tabar S."/>
            <person name="Mulder N."/>
            <person name="Nakano N."/>
            <person name="Nakauchi H."/>
            <person name="Ng P."/>
            <person name="Nilsson R."/>
            <person name="Nishiguchi S."/>
            <person name="Nishikawa S."/>
            <person name="Nori F."/>
            <person name="Ohara O."/>
            <person name="Okazaki Y."/>
            <person name="Orlando V."/>
            <person name="Pang K.C."/>
            <person name="Pavan W.J."/>
            <person name="Pavesi G."/>
            <person name="Pesole G."/>
            <person name="Petrovsky N."/>
            <person name="Piazza S."/>
            <person name="Reed J."/>
            <person name="Reid J.F."/>
            <person name="Ring B.Z."/>
            <person name="Ringwald M."/>
            <person name="Rost B."/>
            <person name="Ruan Y."/>
            <person name="Salzberg S.L."/>
            <person name="Sandelin A."/>
            <person name="Schneider C."/>
            <person name="Schoenbach C."/>
            <person name="Sekiguchi K."/>
            <person name="Semple C.A."/>
            <person name="Seno S."/>
            <person name="Sessa L."/>
            <person name="Sheng Y."/>
            <person name="Shibata Y."/>
            <person name="Shimada H."/>
            <person name="Shimada K."/>
            <person name="Silva D."/>
            <person name="Sinclair B."/>
            <person name="Sperling S."/>
            <person name="Stupka E."/>
            <person name="Sugiura K."/>
            <person name="Sultana R."/>
            <person name="Takenaka Y."/>
            <person name="Taki K."/>
            <person name="Tammoja K."/>
            <person name="Tan S.L."/>
            <person name="Tang S."/>
            <person name="Taylor M.S."/>
            <person name="Tegner J."/>
            <person name="Teichmann S.A."/>
            <person name="Ueda H.R."/>
            <person name="van Nimwegen E."/>
            <person name="Verardo R."/>
            <person name="Wei C.L."/>
            <person name="Yagi K."/>
            <person name="Yamanishi H."/>
            <person name="Zabarovsky E."/>
            <person name="Zhu S."/>
            <person name="Zimmer A."/>
            <person name="Hide W."/>
            <person name="Bult C."/>
            <person name="Grimmond S.M."/>
            <person name="Teasdale R.D."/>
            <person name="Liu E.T."/>
            <person name="Brusic V."/>
            <person name="Quackenbush J."/>
            <person name="Wahlestedt C."/>
            <person name="Mattick J.S."/>
            <person name="Hume D.A."/>
            <person name="Kai C."/>
            <person name="Sasaki D."/>
            <person name="Tomaru Y."/>
            <person name="Fukuda S."/>
            <person name="Kanamori-Katayama M."/>
            <person name="Suzuki M."/>
            <person name="Aoki J."/>
            <person name="Arakawa T."/>
            <person name="Iida J."/>
            <person name="Imamura K."/>
            <person name="Itoh M."/>
            <person name="Kato T."/>
            <person name="Kawaji H."/>
            <person name="Kawagashira N."/>
            <person name="Kawashima T."/>
            <person name="Kojima M."/>
            <person name="Kondo S."/>
            <person name="Konno H."/>
            <person name="Nakano K."/>
            <person name="Ninomiya N."/>
            <person name="Nishio T."/>
            <person name="Okada M."/>
            <person name="Plessy C."/>
            <person name="Shibata K."/>
            <person name="Shiraki T."/>
            <person name="Suzuki S."/>
            <person name="Tagami M."/>
            <person name="Waki K."/>
            <person name="Watahiki A."/>
            <person name="Okamura-Oho Y."/>
            <person name="Suzuki H."/>
            <person name="Kawai J."/>
            <person name="Hayashizaki Y."/>
        </authorList>
    </citation>
    <scope>NUCLEOTIDE SEQUENCE [LARGE SCALE MRNA] (ISOFORMS 1 AND 3)</scope>
    <source>
        <strain>C57BL/6J</strain>
        <tissue>Kidney</tissue>
        <tissue>Spinal cord</tissue>
    </source>
</reference>
<reference key="3">
    <citation type="journal article" date="2004" name="Genome Res.">
        <title>The status, quality, and expansion of the NIH full-length cDNA project: the Mammalian Gene Collection (MGC).</title>
        <authorList>
            <consortium name="The MGC Project Team"/>
        </authorList>
    </citation>
    <scope>NUCLEOTIDE SEQUENCE [LARGE SCALE MRNA] (ISOFORM 2)</scope>
    <source>
        <strain>C57BL/6J</strain>
        <strain>FVB/N</strain>
        <tissue>Brain</tissue>
        <tissue>Mammary tumor</tissue>
    </source>
</reference>
<reference key="4">
    <citation type="journal article" date="2002" name="Mamm. Genome">
        <title>Comparison of human and mouse Fuc-TX and Fuc-TXI genes, and expression studies in the mouse.</title>
        <authorList>
            <person name="Baboval T."/>
            <person name="Smith F.I."/>
        </authorList>
    </citation>
    <scope>TISSUE SPECIFICITY</scope>
</reference>
<reference key="5">
    <citation type="journal article" date="2013" name="J. Biol. Chem.">
        <title>The Lewis X-related alpha1,3-fucosyltransferase, Fut10, is required for the maintenance of stem cell populations.</title>
        <authorList>
            <person name="Kumar A."/>
            <person name="Torii T."/>
            <person name="Ishino Y."/>
            <person name="Muraoka D."/>
            <person name="Yoshimura T."/>
            <person name="Togayachi A."/>
            <person name="Narimatsu H."/>
            <person name="Ikenaka K."/>
            <person name="Hitoshi S."/>
        </authorList>
    </citation>
    <scope>FUNCTION</scope>
    <scope>PATHWAY</scope>
    <scope>DEVELOPMENTAL STAGE</scope>
</reference>
<feature type="chain" id="PRO_0000299003" description="GDP-fucose protein O-fucosyltransferase 3">
    <location>
        <begin position="1"/>
        <end position="481"/>
    </location>
</feature>
<feature type="topological domain" description="Cytoplasmic" evidence="3">
    <location>
        <begin position="1"/>
        <end position="8"/>
    </location>
</feature>
<feature type="transmembrane region" description="Helical; Signal-anchor for type II membrane protein" evidence="3">
    <location>
        <begin position="9"/>
        <end position="31"/>
    </location>
</feature>
<feature type="topological domain" description="Lumenal" evidence="3">
    <location>
        <begin position="32"/>
        <end position="481"/>
    </location>
</feature>
<feature type="glycosylation site" description="N-linked (GlcNAc...) asparagine" evidence="3">
    <location>
        <position position="110"/>
    </location>
</feature>
<feature type="glycosylation site" description="N-linked (GlcNAc...) asparagine" evidence="3">
    <location>
        <position position="168"/>
    </location>
</feature>
<feature type="glycosylation site" description="N-linked (GlcNAc...) asparagine" evidence="3">
    <location>
        <position position="318"/>
    </location>
</feature>
<feature type="glycosylation site" description="N-linked (GlcNAc...) asparagine" evidence="3">
    <location>
        <position position="468"/>
    </location>
</feature>
<feature type="disulfide bond" evidence="1">
    <location>
        <begin position="389"/>
        <end position="392"/>
    </location>
</feature>
<feature type="splice variant" id="VSP_027507" description="In isoform 3." evidence="7">
    <original>TDFNIDSLPL</original>
    <variation>LTTQTMEGRC</variation>
    <location>
        <begin position="127"/>
        <end position="136"/>
    </location>
</feature>
<feature type="splice variant" id="VSP_027508" description="In isoform 3." evidence="7">
    <location>
        <begin position="137"/>
        <end position="481"/>
    </location>
</feature>
<feature type="splice variant" id="VSP_027509" description="In isoform 2." evidence="6">
    <original>GLPPKQWKADVSHLHCPEPALFTFSSPASPALRGRSLRELWLPSFQQSKKEAQALRWLVDRNQNFSSEEFWALVFKD</original>
    <variation>VSEWKSGGWHGPSLCVVLVFLLWWLPATGLYS</variation>
    <location>
        <begin position="405"/>
        <end position="481"/>
    </location>
</feature>
<feature type="sequence conflict" description="In Ref. 3; AAH22579." evidence="9" ref="3">
    <original>S</original>
    <variation>N</variation>
    <location>
        <position position="335"/>
    </location>
</feature>
<organism>
    <name type="scientific">Mus musculus</name>
    <name type="common">Mouse</name>
    <dbReference type="NCBI Taxonomy" id="10090"/>
    <lineage>
        <taxon>Eukaryota</taxon>
        <taxon>Metazoa</taxon>
        <taxon>Chordata</taxon>
        <taxon>Craniata</taxon>
        <taxon>Vertebrata</taxon>
        <taxon>Euteleostomi</taxon>
        <taxon>Mammalia</taxon>
        <taxon>Eutheria</taxon>
        <taxon>Euarchontoglires</taxon>
        <taxon>Glires</taxon>
        <taxon>Rodentia</taxon>
        <taxon>Myomorpha</taxon>
        <taxon>Muroidea</taxon>
        <taxon>Muridae</taxon>
        <taxon>Murinae</taxon>
        <taxon>Mus</taxon>
        <taxon>Mus</taxon>
    </lineage>
</organism>
<dbReference type="EC" id="2.4.1.221" evidence="2"/>
<dbReference type="EC" id="2.4.1.-" evidence="5"/>
<dbReference type="EMBL" id="AJ880009">
    <property type="protein sequence ID" value="CAI53944.1"/>
    <property type="molecule type" value="mRNA"/>
</dbReference>
<dbReference type="EMBL" id="AK083041">
    <property type="protein sequence ID" value="BAC38741.1"/>
    <property type="molecule type" value="mRNA"/>
</dbReference>
<dbReference type="EMBL" id="AK147136">
    <property type="protein sequence ID" value="BAE27706.1"/>
    <property type="molecule type" value="mRNA"/>
</dbReference>
<dbReference type="EMBL" id="AK169153">
    <property type="protein sequence ID" value="BAE40932.1"/>
    <property type="molecule type" value="mRNA"/>
</dbReference>
<dbReference type="EMBL" id="BC022579">
    <property type="protein sequence ID" value="AAH22579.1"/>
    <property type="molecule type" value="mRNA"/>
</dbReference>
<dbReference type="EMBL" id="BC030474">
    <property type="protein sequence ID" value="AAH30474.1"/>
    <property type="molecule type" value="mRNA"/>
</dbReference>
<dbReference type="EMBL" id="BC062113">
    <property type="protein sequence ID" value="AAH62113.1"/>
    <property type="molecule type" value="mRNA"/>
</dbReference>
<dbReference type="CCDS" id="CCDS22223.1">
    <molecule id="Q5F2L2-1"/>
</dbReference>
<dbReference type="CCDS" id="CCDS52536.1">
    <molecule id="Q5F2L2-2"/>
</dbReference>
<dbReference type="CCDS" id="CCDS72111.1">
    <molecule id="Q5F2L2-3"/>
</dbReference>
<dbReference type="RefSeq" id="NP_001012535.1">
    <molecule id="Q5F2L2-1"/>
    <property type="nucleotide sequence ID" value="NM_001012517.6"/>
</dbReference>
<dbReference type="RefSeq" id="NP_001273351.1">
    <molecule id="Q5F2L2-1"/>
    <property type="nucleotide sequence ID" value="NM_001286422.2"/>
</dbReference>
<dbReference type="RefSeq" id="NP_001273353.1">
    <molecule id="Q5F2L2-2"/>
    <property type="nucleotide sequence ID" value="NM_001286424.2"/>
</dbReference>
<dbReference type="RefSeq" id="NP_001273354.1">
    <molecule id="Q5F2L2-3"/>
    <property type="nucleotide sequence ID" value="NM_001286425.2"/>
</dbReference>
<dbReference type="RefSeq" id="NP_598922.1">
    <molecule id="Q5F2L2-2"/>
    <property type="nucleotide sequence ID" value="NM_134161.4"/>
</dbReference>
<dbReference type="RefSeq" id="XP_030099189.1">
    <molecule id="Q5F2L2-1"/>
    <property type="nucleotide sequence ID" value="XM_030243329.2"/>
</dbReference>
<dbReference type="SMR" id="Q5F2L2"/>
<dbReference type="FunCoup" id="Q5F2L2">
    <property type="interactions" value="1839"/>
</dbReference>
<dbReference type="STRING" id="10090.ENSMUSP00000125265"/>
<dbReference type="CAZy" id="GT10">
    <property type="family name" value="Glycosyltransferase Family 10"/>
</dbReference>
<dbReference type="GlyCosmos" id="Q5F2L2">
    <property type="glycosylation" value="4 sites, No reported glycans"/>
</dbReference>
<dbReference type="GlyGen" id="Q5F2L2">
    <property type="glycosylation" value="4 sites, 1 N-linked glycan (1 site)"/>
</dbReference>
<dbReference type="iPTMnet" id="Q5F2L2"/>
<dbReference type="PhosphoSitePlus" id="Q5F2L2"/>
<dbReference type="PaxDb" id="10090-ENSMUSP00000069816"/>
<dbReference type="PeptideAtlas" id="Q5F2L2"/>
<dbReference type="ProteomicsDB" id="271647">
    <molecule id="Q5F2L2-1"/>
</dbReference>
<dbReference type="ProteomicsDB" id="271648">
    <molecule id="Q5F2L2-2"/>
</dbReference>
<dbReference type="ProteomicsDB" id="271649">
    <molecule id="Q5F2L2-3"/>
</dbReference>
<dbReference type="Pumba" id="Q5F2L2"/>
<dbReference type="Antibodypedia" id="23343">
    <property type="antibodies" value="172 antibodies from 23 providers"/>
</dbReference>
<dbReference type="DNASU" id="171167"/>
<dbReference type="Ensembl" id="ENSMUST00000066173.12">
    <molecule id="Q5F2L2-1"/>
    <property type="protein sequence ID" value="ENSMUSP00000069816.6"/>
    <property type="gene ID" value="ENSMUSG00000046152.17"/>
</dbReference>
<dbReference type="Ensembl" id="ENSMUST00000110527.9">
    <molecule id="Q5F2L2-3"/>
    <property type="protein sequence ID" value="ENSMUSP00000106156.3"/>
    <property type="gene ID" value="ENSMUSG00000046152.17"/>
</dbReference>
<dbReference type="Ensembl" id="ENSMUST00000161502.2">
    <molecule id="Q5F2L2-1"/>
    <property type="protein sequence ID" value="ENSMUSP00000125265.2"/>
    <property type="gene ID" value="ENSMUSG00000046152.17"/>
</dbReference>
<dbReference type="Ensembl" id="ENSMUST00000161788.8">
    <molecule id="Q5F2L2-2"/>
    <property type="protein sequence ID" value="ENSMUSP00000124437.2"/>
    <property type="gene ID" value="ENSMUSG00000046152.17"/>
</dbReference>
<dbReference type="GeneID" id="171167"/>
<dbReference type="KEGG" id="mmu:171167"/>
<dbReference type="UCSC" id="uc009ljj.2">
    <molecule id="Q5F2L2-2"/>
    <property type="organism name" value="mouse"/>
</dbReference>
<dbReference type="UCSC" id="uc009ljk.2">
    <molecule id="Q5F2L2-1"/>
    <property type="organism name" value="mouse"/>
</dbReference>
<dbReference type="UCSC" id="uc012gby.2">
    <molecule id="Q5F2L2-3"/>
    <property type="organism name" value="mouse"/>
</dbReference>
<dbReference type="AGR" id="MGI:2384748"/>
<dbReference type="CTD" id="84750"/>
<dbReference type="MGI" id="MGI:2384748">
    <property type="gene designation" value="Fut10"/>
</dbReference>
<dbReference type="VEuPathDB" id="HostDB:ENSMUSG00000046152"/>
<dbReference type="eggNOG" id="KOG2619">
    <property type="taxonomic scope" value="Eukaryota"/>
</dbReference>
<dbReference type="GeneTree" id="ENSGT00940000160287"/>
<dbReference type="HOGENOM" id="CLU_032075_0_2_1"/>
<dbReference type="InParanoid" id="Q5F2L2"/>
<dbReference type="OMA" id="IRQLDYD"/>
<dbReference type="OrthoDB" id="9993460at2759"/>
<dbReference type="PhylomeDB" id="Q5F2L2"/>
<dbReference type="TreeFam" id="TF316348"/>
<dbReference type="Reactome" id="R-MMU-9037629">
    <property type="pathway name" value="Lewis blood group biosynthesis"/>
</dbReference>
<dbReference type="UniPathway" id="UPA00378"/>
<dbReference type="BioGRID-ORCS" id="171167">
    <property type="hits" value="1 hit in 77 CRISPR screens"/>
</dbReference>
<dbReference type="ChiTaRS" id="Fut10">
    <property type="organism name" value="mouse"/>
</dbReference>
<dbReference type="PRO" id="PR:Q5F2L2"/>
<dbReference type="Proteomes" id="UP000000589">
    <property type="component" value="Chromosome 8"/>
</dbReference>
<dbReference type="RNAct" id="Q5F2L2">
    <property type="molecule type" value="protein"/>
</dbReference>
<dbReference type="Bgee" id="ENSMUSG00000046152">
    <property type="expression patterns" value="Expressed in embryonic post-anal tail and 154 other cell types or tissues"/>
</dbReference>
<dbReference type="GO" id="GO:0005783">
    <property type="term" value="C:endoplasmic reticulum"/>
    <property type="evidence" value="ECO:0000250"/>
    <property type="project" value="UniProtKB"/>
</dbReference>
<dbReference type="GO" id="GO:0005789">
    <property type="term" value="C:endoplasmic reticulum membrane"/>
    <property type="evidence" value="ECO:0007669"/>
    <property type="project" value="UniProtKB-SubCell"/>
</dbReference>
<dbReference type="GO" id="GO:0005794">
    <property type="term" value="C:Golgi apparatus"/>
    <property type="evidence" value="ECO:0000266"/>
    <property type="project" value="MGI"/>
</dbReference>
<dbReference type="GO" id="GO:0000139">
    <property type="term" value="C:Golgi membrane"/>
    <property type="evidence" value="ECO:0007669"/>
    <property type="project" value="InterPro"/>
</dbReference>
<dbReference type="GO" id="GO:0005654">
    <property type="term" value="C:nucleoplasm"/>
    <property type="evidence" value="ECO:0007669"/>
    <property type="project" value="Ensembl"/>
</dbReference>
<dbReference type="GO" id="GO:0046920">
    <property type="term" value="F:alpha-(1-&gt;3)-fucosyltransferase activity"/>
    <property type="evidence" value="ECO:0000314"/>
    <property type="project" value="MGI"/>
</dbReference>
<dbReference type="GO" id="GO:0046922">
    <property type="term" value="F:peptide-O-fucosyltransferase activity"/>
    <property type="evidence" value="ECO:0000250"/>
    <property type="project" value="UniProtKB"/>
</dbReference>
<dbReference type="GO" id="GO:0021799">
    <property type="term" value="P:cerebral cortex radially oriented cell migration"/>
    <property type="evidence" value="ECO:0000315"/>
    <property type="project" value="MGI"/>
</dbReference>
<dbReference type="GO" id="GO:0036071">
    <property type="term" value="P:N-glycan fucosylation"/>
    <property type="evidence" value="ECO:0000314"/>
    <property type="project" value="UniProtKB"/>
</dbReference>
<dbReference type="GO" id="GO:0097402">
    <property type="term" value="P:neuroblast migration"/>
    <property type="evidence" value="ECO:0000315"/>
    <property type="project" value="MGI"/>
</dbReference>
<dbReference type="GO" id="GO:0036445">
    <property type="term" value="P:neuronal stem cell division"/>
    <property type="evidence" value="ECO:0000315"/>
    <property type="project" value="UniProtKB"/>
</dbReference>
<dbReference type="GO" id="GO:0097150">
    <property type="term" value="P:neuronal stem cell population maintenance"/>
    <property type="evidence" value="ECO:0000315"/>
    <property type="project" value="MGI"/>
</dbReference>
<dbReference type="GO" id="GO:0009312">
    <property type="term" value="P:oligosaccharide biosynthetic process"/>
    <property type="evidence" value="ECO:0000314"/>
    <property type="project" value="MGI"/>
</dbReference>
<dbReference type="GO" id="GO:0050714">
    <property type="term" value="P:positive regulation of protein secretion"/>
    <property type="evidence" value="ECO:0000250"/>
    <property type="project" value="UniProtKB"/>
</dbReference>
<dbReference type="FunFam" id="3.40.50.11660:FF:000002">
    <property type="entry name" value="Alpha-(1,3)-fucosyltransferase"/>
    <property type="match status" value="1"/>
</dbReference>
<dbReference type="Gene3D" id="3.40.50.11660">
    <property type="entry name" value="Glycosyl transferase family 10, C-terminal domain"/>
    <property type="match status" value="1"/>
</dbReference>
<dbReference type="InterPro" id="IPR017176">
    <property type="entry name" value="Alpha-1_3-FUT_met"/>
</dbReference>
<dbReference type="InterPro" id="IPR055270">
    <property type="entry name" value="Glyco_tran_10_C"/>
</dbReference>
<dbReference type="InterPro" id="IPR031481">
    <property type="entry name" value="Glyco_tran_10_N"/>
</dbReference>
<dbReference type="InterPro" id="IPR001503">
    <property type="entry name" value="Glyco_trans_10"/>
</dbReference>
<dbReference type="InterPro" id="IPR038577">
    <property type="entry name" value="GT10-like_C_sf"/>
</dbReference>
<dbReference type="PANTHER" id="PTHR11929">
    <property type="entry name" value="ALPHA- 1,3 -FUCOSYLTRANSFERASE"/>
    <property type="match status" value="1"/>
</dbReference>
<dbReference type="PANTHER" id="PTHR11929:SF194">
    <property type="entry name" value="ALPHA-(1,3)-FUCOSYLTRANSFERASE 10"/>
    <property type="match status" value="1"/>
</dbReference>
<dbReference type="Pfam" id="PF17039">
    <property type="entry name" value="Glyco_tran_10_N"/>
    <property type="match status" value="1"/>
</dbReference>
<dbReference type="Pfam" id="PF00852">
    <property type="entry name" value="Glyco_transf_10"/>
    <property type="match status" value="1"/>
</dbReference>
<dbReference type="PIRSF" id="PIRSF037332">
    <property type="entry name" value="Alpha1_3FUT_met"/>
    <property type="match status" value="1"/>
</dbReference>
<dbReference type="SUPFAM" id="SSF53756">
    <property type="entry name" value="UDP-Glycosyltransferase/glycogen phosphorylase"/>
    <property type="match status" value="1"/>
</dbReference>
<proteinExistence type="evidence at transcript level"/>
<protein>
    <recommendedName>
        <fullName>GDP-fucose protein O-fucosyltransferase 3</fullName>
        <ecNumber evidence="2">2.4.1.221</ecNumber>
    </recommendedName>
    <alternativeName>
        <fullName>Alpha-(1,3)-fucosyltransferase 10</fullName>
        <ecNumber evidence="5">2.4.1.-</ecNumber>
    </alternativeName>
    <alternativeName>
        <fullName>Fucosyltransferase X</fullName>
        <shortName>Fuc-TX</shortName>
        <shortName>FucT-X</shortName>
    </alternativeName>
    <alternativeName>
        <fullName>Galactoside 3-L-fucosyltransferase 10</fullName>
        <shortName>Fucosyltransferase 10</shortName>
    </alternativeName>
</protein>
<gene>
    <name evidence="8 10" type="primary">Fut10</name>
    <name evidence="2" type="synonym">Pofut3</name>
</gene>